<protein>
    <recommendedName>
        <fullName evidence="1">Chaperone protein DnaK</fullName>
    </recommendedName>
    <alternativeName>
        <fullName evidence="1">HSP70</fullName>
    </alternativeName>
    <alternativeName>
        <fullName evidence="1">Heat shock 70 kDa protein</fullName>
    </alternativeName>
    <alternativeName>
        <fullName evidence="1">Heat shock protein 70</fullName>
    </alternativeName>
</protein>
<evidence type="ECO:0000255" key="1">
    <source>
        <dbReference type="HAMAP-Rule" id="MF_00332"/>
    </source>
</evidence>
<evidence type="ECO:0000256" key="2">
    <source>
        <dbReference type="SAM" id="MobiDB-lite"/>
    </source>
</evidence>
<keyword id="KW-0067">ATP-binding</keyword>
<keyword id="KW-0143">Chaperone</keyword>
<keyword id="KW-0547">Nucleotide-binding</keyword>
<keyword id="KW-0597">Phosphoprotein</keyword>
<keyword id="KW-0346">Stress response</keyword>
<feature type="chain" id="PRO_0000225955" description="Chaperone protein DnaK">
    <location>
        <begin position="1"/>
        <end position="645"/>
    </location>
</feature>
<feature type="region of interest" description="Disordered" evidence="2">
    <location>
        <begin position="604"/>
        <end position="645"/>
    </location>
</feature>
<feature type="compositionally biased region" description="Low complexity" evidence="2">
    <location>
        <begin position="605"/>
        <end position="622"/>
    </location>
</feature>
<feature type="modified residue" description="Phosphothreonine; by autocatalysis" evidence="1">
    <location>
        <position position="200"/>
    </location>
</feature>
<reference key="1">
    <citation type="journal article" date="2009" name="BMC Genomics">
        <title>Metabolic analysis of the soil microbe Dechloromonas aromatica str. RCB: indications of a surprisingly complex life-style and cryptic anaerobic pathways for aromatic degradation.</title>
        <authorList>
            <person name="Salinero K.K."/>
            <person name="Keller K."/>
            <person name="Feil W.S."/>
            <person name="Feil H."/>
            <person name="Trong S."/>
            <person name="Di Bartolo G."/>
            <person name="Lapidus A."/>
        </authorList>
    </citation>
    <scope>NUCLEOTIDE SEQUENCE [LARGE SCALE GENOMIC DNA]</scope>
    <source>
        <strain>RCB</strain>
    </source>
</reference>
<organism>
    <name type="scientific">Dechloromonas aromatica (strain RCB)</name>
    <dbReference type="NCBI Taxonomy" id="159087"/>
    <lineage>
        <taxon>Bacteria</taxon>
        <taxon>Pseudomonadati</taxon>
        <taxon>Pseudomonadota</taxon>
        <taxon>Betaproteobacteria</taxon>
        <taxon>Rhodocyclales</taxon>
        <taxon>Azonexaceae</taxon>
        <taxon>Dechloromonas</taxon>
    </lineage>
</organism>
<accession>Q47HK2</accession>
<sequence>MGKIIGIDLGTTNSCVAIMEGGQPKVIENAEGARTTPSIIGYTEDGEILCGAPAKRQAVTNPKNTLYAVKRLIGRRFEEKEVQKDISLMPFKIVKADNGDAWVEARDKKIAPPQVSAEVLRKMKKTAEDYLGEEVTEAVITVPAYFNDSQRQATKDAGRIAGLEVKRIINEPTAAALAFGMDKTSKSDRKIAVYDLGGGTFDISIIEIANVDGETQFEVLATNGDTFLGGEDFDQRLIDYIIDEFKKESGVNLKADVLALQRLKEAAEKAKIELSSSQQTEVNLPYITADASGPKHLALKITRAKFESLVDELIERTMAPCVTALKDAGCKISDIDDIILVGGQSRMPKVQEKVKEIFGKEPRKDVNPDEAVAVGAAIQGGVLQGEVKDVLLLDVTPLSLGIETLGGIMTKLIQKNTTIPTKASQTFSTADDNQAAVTIHVLQGEREVASGNKSLGQFNLEGIPPAPRGTPQIEVIFDIDANGIMHVTAKDKATGKENKITIKANSGLSEAEIQAMVKDAELHAEEDKKAHELADARNQADGMVHMVKKSLTEYGDKLDASEKAAIEAAIKDVEDVLRDGDKETITAKTEALSAAAQKLGEKMYAQQQAEGAAAGATGQQAEAGEKTVEGDVVDAEFTEVNKDKK</sequence>
<gene>
    <name evidence="1" type="primary">dnaK</name>
    <name type="ordered locus">Daro_0923</name>
</gene>
<name>DNAK_DECAR</name>
<comment type="function">
    <text evidence="1">Acts as a chaperone.</text>
</comment>
<comment type="induction">
    <text evidence="1">By stress conditions e.g. heat shock.</text>
</comment>
<comment type="similarity">
    <text evidence="1">Belongs to the heat shock protein 70 family.</text>
</comment>
<dbReference type="EMBL" id="CP000089">
    <property type="protein sequence ID" value="AAZ45679.1"/>
    <property type="molecule type" value="Genomic_DNA"/>
</dbReference>
<dbReference type="SMR" id="Q47HK2"/>
<dbReference type="STRING" id="159087.Daro_0923"/>
<dbReference type="KEGG" id="dar:Daro_0923"/>
<dbReference type="eggNOG" id="COG0443">
    <property type="taxonomic scope" value="Bacteria"/>
</dbReference>
<dbReference type="HOGENOM" id="CLU_005965_2_1_4"/>
<dbReference type="OrthoDB" id="9766019at2"/>
<dbReference type="GO" id="GO:0005524">
    <property type="term" value="F:ATP binding"/>
    <property type="evidence" value="ECO:0007669"/>
    <property type="project" value="UniProtKB-UniRule"/>
</dbReference>
<dbReference type="GO" id="GO:0140662">
    <property type="term" value="F:ATP-dependent protein folding chaperone"/>
    <property type="evidence" value="ECO:0007669"/>
    <property type="project" value="InterPro"/>
</dbReference>
<dbReference type="GO" id="GO:0051082">
    <property type="term" value="F:unfolded protein binding"/>
    <property type="evidence" value="ECO:0007669"/>
    <property type="project" value="InterPro"/>
</dbReference>
<dbReference type="CDD" id="cd10234">
    <property type="entry name" value="ASKHA_NBD_HSP70_DnaK-like"/>
    <property type="match status" value="1"/>
</dbReference>
<dbReference type="FunFam" id="2.60.34.10:FF:000014">
    <property type="entry name" value="Chaperone protein DnaK HSP70"/>
    <property type="match status" value="1"/>
</dbReference>
<dbReference type="FunFam" id="1.20.1270.10:FF:000001">
    <property type="entry name" value="Molecular chaperone DnaK"/>
    <property type="match status" value="1"/>
</dbReference>
<dbReference type="FunFam" id="3.30.420.40:FF:000004">
    <property type="entry name" value="Molecular chaperone DnaK"/>
    <property type="match status" value="1"/>
</dbReference>
<dbReference type="FunFam" id="3.90.640.10:FF:000003">
    <property type="entry name" value="Molecular chaperone DnaK"/>
    <property type="match status" value="1"/>
</dbReference>
<dbReference type="Gene3D" id="1.20.1270.10">
    <property type="match status" value="1"/>
</dbReference>
<dbReference type="Gene3D" id="3.30.420.40">
    <property type="match status" value="2"/>
</dbReference>
<dbReference type="Gene3D" id="3.90.640.10">
    <property type="entry name" value="Actin, Chain A, domain 4"/>
    <property type="match status" value="1"/>
</dbReference>
<dbReference type="Gene3D" id="2.60.34.10">
    <property type="entry name" value="Substrate Binding Domain Of DNAk, Chain A, domain 1"/>
    <property type="match status" value="1"/>
</dbReference>
<dbReference type="HAMAP" id="MF_00332">
    <property type="entry name" value="DnaK"/>
    <property type="match status" value="1"/>
</dbReference>
<dbReference type="InterPro" id="IPR043129">
    <property type="entry name" value="ATPase_NBD"/>
</dbReference>
<dbReference type="InterPro" id="IPR012725">
    <property type="entry name" value="Chaperone_DnaK"/>
</dbReference>
<dbReference type="InterPro" id="IPR018181">
    <property type="entry name" value="Heat_shock_70_CS"/>
</dbReference>
<dbReference type="InterPro" id="IPR029048">
    <property type="entry name" value="HSP70_C_sf"/>
</dbReference>
<dbReference type="InterPro" id="IPR029047">
    <property type="entry name" value="HSP70_peptide-bd_sf"/>
</dbReference>
<dbReference type="InterPro" id="IPR013126">
    <property type="entry name" value="Hsp_70_fam"/>
</dbReference>
<dbReference type="NCBIfam" id="NF001413">
    <property type="entry name" value="PRK00290.1"/>
    <property type="match status" value="1"/>
</dbReference>
<dbReference type="NCBIfam" id="NF003520">
    <property type="entry name" value="PRK05183.1"/>
    <property type="match status" value="1"/>
</dbReference>
<dbReference type="NCBIfam" id="TIGR02350">
    <property type="entry name" value="prok_dnaK"/>
    <property type="match status" value="1"/>
</dbReference>
<dbReference type="PANTHER" id="PTHR19375">
    <property type="entry name" value="HEAT SHOCK PROTEIN 70KDA"/>
    <property type="match status" value="1"/>
</dbReference>
<dbReference type="Pfam" id="PF00012">
    <property type="entry name" value="HSP70"/>
    <property type="match status" value="1"/>
</dbReference>
<dbReference type="PRINTS" id="PR00301">
    <property type="entry name" value="HEATSHOCK70"/>
</dbReference>
<dbReference type="SUPFAM" id="SSF53067">
    <property type="entry name" value="Actin-like ATPase domain"/>
    <property type="match status" value="2"/>
</dbReference>
<dbReference type="SUPFAM" id="SSF100934">
    <property type="entry name" value="Heat shock protein 70kD (HSP70), C-terminal subdomain"/>
    <property type="match status" value="1"/>
</dbReference>
<dbReference type="SUPFAM" id="SSF100920">
    <property type="entry name" value="Heat shock protein 70kD (HSP70), peptide-binding domain"/>
    <property type="match status" value="1"/>
</dbReference>
<dbReference type="PROSITE" id="PS00297">
    <property type="entry name" value="HSP70_1"/>
    <property type="match status" value="1"/>
</dbReference>
<dbReference type="PROSITE" id="PS00329">
    <property type="entry name" value="HSP70_2"/>
    <property type="match status" value="1"/>
</dbReference>
<dbReference type="PROSITE" id="PS01036">
    <property type="entry name" value="HSP70_3"/>
    <property type="match status" value="1"/>
</dbReference>
<proteinExistence type="inferred from homology"/>